<accession>P61757</accession>
<protein>
    <recommendedName>
        <fullName>C-C chemokine receptor type 5</fullName>
        <shortName>C-C CKR-5</shortName>
        <shortName>CC-CKR-5</shortName>
        <shortName>CCR-5</shortName>
        <shortName>CCR5</shortName>
    </recommendedName>
    <cdAntigenName>CD195</cdAntigenName>
</protein>
<feature type="chain" id="PRO_0000069281" description="C-C chemokine receptor type 5">
    <location>
        <begin position="1"/>
        <end position="352"/>
    </location>
</feature>
<feature type="topological domain" description="Extracellular" evidence="3">
    <location>
        <begin position="1"/>
        <end position="30"/>
    </location>
</feature>
<feature type="transmembrane region" description="Helical; Name=1" evidence="3">
    <location>
        <begin position="31"/>
        <end position="58"/>
    </location>
</feature>
<feature type="topological domain" description="Cytoplasmic" evidence="3">
    <location>
        <begin position="59"/>
        <end position="68"/>
    </location>
</feature>
<feature type="transmembrane region" description="Helical; Name=2" evidence="3">
    <location>
        <begin position="69"/>
        <end position="89"/>
    </location>
</feature>
<feature type="topological domain" description="Extracellular" evidence="3">
    <location>
        <begin position="90"/>
        <end position="102"/>
    </location>
</feature>
<feature type="transmembrane region" description="Helical; Name=3" evidence="3">
    <location>
        <begin position="103"/>
        <end position="124"/>
    </location>
</feature>
<feature type="topological domain" description="Cytoplasmic" evidence="3">
    <location>
        <begin position="125"/>
        <end position="141"/>
    </location>
</feature>
<feature type="transmembrane region" description="Helical; Name=4" evidence="3">
    <location>
        <begin position="142"/>
        <end position="166"/>
    </location>
</feature>
<feature type="topological domain" description="Extracellular" evidence="3">
    <location>
        <begin position="167"/>
        <end position="198"/>
    </location>
</feature>
<feature type="transmembrane region" description="Helical; Name=5" evidence="3">
    <location>
        <begin position="199"/>
        <end position="218"/>
    </location>
</feature>
<feature type="topological domain" description="Cytoplasmic" evidence="3">
    <location>
        <begin position="219"/>
        <end position="235"/>
    </location>
</feature>
<feature type="transmembrane region" description="Helical; Name=6" evidence="3">
    <location>
        <begin position="236"/>
        <end position="260"/>
    </location>
</feature>
<feature type="topological domain" description="Extracellular" evidence="3">
    <location>
        <begin position="261"/>
        <end position="277"/>
    </location>
</feature>
<feature type="transmembrane region" description="Helical; Name=7" evidence="3">
    <location>
        <begin position="278"/>
        <end position="301"/>
    </location>
</feature>
<feature type="topological domain" description="Cytoplasmic" evidence="3">
    <location>
        <begin position="302"/>
        <end position="352"/>
    </location>
</feature>
<feature type="modified residue" description="Sulfotyrosine" evidence="1">
    <location>
        <position position="3"/>
    </location>
</feature>
<feature type="modified residue" description="Sulfotyrosine" evidence="3">
    <location>
        <position position="10"/>
    </location>
</feature>
<feature type="modified residue" description="Sulfotyrosine" evidence="3">
    <location>
        <position position="14"/>
    </location>
</feature>
<feature type="modified residue" description="Sulfotyrosine" evidence="3">
    <location>
        <position position="15"/>
    </location>
</feature>
<feature type="modified residue" description="Phosphoserine; by BARK1" evidence="1">
    <location>
        <position position="336"/>
    </location>
</feature>
<feature type="modified residue" description="Phosphoserine; by BARK1" evidence="1">
    <location>
        <position position="337"/>
    </location>
</feature>
<feature type="modified residue" description="Phosphoserine; by BARK1" evidence="1">
    <location>
        <position position="342"/>
    </location>
</feature>
<feature type="modified residue" description="Phosphoserine; by BARK1" evidence="1">
    <location>
        <position position="349"/>
    </location>
</feature>
<feature type="lipid moiety-binding region" description="S-palmitoyl cysteine" evidence="1">
    <location>
        <position position="321"/>
    </location>
</feature>
<feature type="lipid moiety-binding region" description="S-palmitoyl cysteine" evidence="1">
    <location>
        <position position="323"/>
    </location>
</feature>
<feature type="lipid moiety-binding region" description="S-palmitoyl cysteine" evidence="1">
    <location>
        <position position="324"/>
    </location>
</feature>
<feature type="glycosylation site" description="O-linked (GalNAc...) serine" evidence="1">
    <location>
        <position position="6"/>
    </location>
</feature>
<feature type="glycosylation site" description="O-linked (GalNAc...) serine" evidence="1">
    <location>
        <position position="7"/>
    </location>
</feature>
<feature type="disulfide bond" evidence="1">
    <location>
        <begin position="20"/>
        <end position="269"/>
    </location>
</feature>
<feature type="disulfide bond" evidence="4">
    <location>
        <begin position="101"/>
        <end position="178"/>
    </location>
</feature>
<name>CCR5_SEMEN</name>
<reference key="1">
    <citation type="journal article" date="1999" name="Mol. Biol. Evol.">
        <title>Sequence evolution of the CCR5 chemokine receptor gene in primates.</title>
        <authorList>
            <person name="Zhang Y.-W."/>
            <person name="Ryder O.A."/>
            <person name="Zhang Y.-P."/>
        </authorList>
    </citation>
    <scope>NUCLEOTIDE SEQUENCE [GENOMIC DNA]</scope>
</reference>
<comment type="function">
    <text evidence="1">Receptor for a number of inflammatory CC-chemokines including CCL3/MIP-1-alpha, CCL4/MIP-1-beta and RANTES and subsequently transduces a signal by increasing the intracellular calcium ion level. May play a role in the control of granulocytic lineage proliferation or differentiation. Participates in T-lymphocyte migration to the infection site by acting as a chemotactic receptor.</text>
</comment>
<comment type="subunit">
    <text evidence="1">Interacts with PRAF2. Efficient ligand binding to CCL3/MIP-1alpha and CCL4/MIP-1beta requires sulfation, O-glycosylation and sialic acid modifications. Glycosylation on Ser-6 is required for efficient binding of CCL4. Interacts with GRK2. Interacts with ARRB1 and ARRB2. Interacts with CNIH4. Interacts with S100A4; this interaction stimulates T-lymphocyte chemotaxis.</text>
</comment>
<comment type="subcellular location">
    <subcellularLocation>
        <location evidence="2">Cell membrane</location>
        <topology evidence="2">Multi-pass membrane protein</topology>
    </subcellularLocation>
</comment>
<comment type="PTM">
    <text evidence="1">Sulfated on at least 2 of the N-terminal tyrosines. Sulfation is required for efficient binding of the chemokines, CCL3 and CCL4 (By similarity).</text>
</comment>
<comment type="PTM">
    <text evidence="1">Palmitoylation in the C-terminal is important for cell surface expression.</text>
</comment>
<comment type="PTM">
    <text evidence="1">Phosphorylation on serine residues in the C-terminal is stimulated by binding CC chemokines especially by APO-RANTES.</text>
</comment>
<comment type="PTM">
    <text evidence="1">O-glycosylated, but not N-glycosylated. Ser-6 appears to be the major site even if Ser-7 may be also O-glycosylated. Also sialylated glycans present which contribute to chemokine binding. Thr-16 and Ser-17 may also be glycosylated and, if so, with small moieties such as a T-antigen.</text>
</comment>
<comment type="similarity">
    <text evidence="4">Belongs to the G-protein coupled receptor 1 family.</text>
</comment>
<organism>
    <name type="scientific">Semnopithecus entellus</name>
    <name type="common">Northern plains gray langur</name>
    <name type="synonym">Presbytis entellus</name>
    <dbReference type="NCBI Taxonomy" id="88029"/>
    <lineage>
        <taxon>Eukaryota</taxon>
        <taxon>Metazoa</taxon>
        <taxon>Chordata</taxon>
        <taxon>Craniata</taxon>
        <taxon>Vertebrata</taxon>
        <taxon>Euteleostomi</taxon>
        <taxon>Mammalia</taxon>
        <taxon>Eutheria</taxon>
        <taxon>Euarchontoglires</taxon>
        <taxon>Primates</taxon>
        <taxon>Haplorrhini</taxon>
        <taxon>Catarrhini</taxon>
        <taxon>Cercopithecidae</taxon>
        <taxon>Colobinae</taxon>
        <taxon>Semnopithecus</taxon>
    </lineage>
</organism>
<evidence type="ECO:0000250" key="1">
    <source>
        <dbReference type="UniProtKB" id="P51681"/>
    </source>
</evidence>
<evidence type="ECO:0000250" key="2">
    <source>
        <dbReference type="UniProtKB" id="Q9XT76"/>
    </source>
</evidence>
<evidence type="ECO:0000255" key="3"/>
<evidence type="ECO:0000255" key="4">
    <source>
        <dbReference type="PROSITE-ProRule" id="PRU00521"/>
    </source>
</evidence>
<sequence>MDYQVSSPTYDIDYYTSEPCQKVNVKQIAARLLPPLYSLVFIFGFVGNILVVLILINCKRLKSMTDIYLLNLAISDLFFLLTVPFWAHYAAAQWDFGNTMCQLLTGLYFIGFFSGIFFIILLTIDRYLAIVHAVFALKARTVTFGVVTSVITWVVAVFASLPGIIFTRSQREGLHYTCSSHFPYSQYQFWKNFQTLKIVILGLVLPLLVMVICYSGILKTLLRCRNEKKRHRAVRLIFTIMIVYFLFWAPYNIVLLLNTFQEFFGLNNCSSSNRLDQAMQVTETLGMTHCCINPIIYAFVGEKFRNYLLVFFQKHIAKRFCKCCSIFQQEAPERASSVYTRSTGEQEISVGL</sequence>
<gene>
    <name type="primary">CCR5</name>
    <name type="synonym">CMKBR5</name>
</gene>
<dbReference type="EMBL" id="AF177896">
    <property type="protein sequence ID" value="AAK43379.1"/>
    <property type="molecule type" value="Genomic_DNA"/>
</dbReference>
<dbReference type="SMR" id="P61757"/>
<dbReference type="GlyCosmos" id="P61757">
    <property type="glycosylation" value="2 sites, No reported glycans"/>
</dbReference>
<dbReference type="GO" id="GO:0005737">
    <property type="term" value="C:cytoplasm"/>
    <property type="evidence" value="ECO:0007669"/>
    <property type="project" value="TreeGrafter"/>
</dbReference>
<dbReference type="GO" id="GO:0009897">
    <property type="term" value="C:external side of plasma membrane"/>
    <property type="evidence" value="ECO:0000250"/>
    <property type="project" value="UniProtKB"/>
</dbReference>
<dbReference type="GO" id="GO:0016493">
    <property type="term" value="F:C-C chemokine receptor activity"/>
    <property type="evidence" value="ECO:0000250"/>
    <property type="project" value="UniProtKB"/>
</dbReference>
<dbReference type="GO" id="GO:0071791">
    <property type="term" value="F:chemokine (C-C motif) ligand 5 binding"/>
    <property type="evidence" value="ECO:0007669"/>
    <property type="project" value="TreeGrafter"/>
</dbReference>
<dbReference type="GO" id="GO:0019722">
    <property type="term" value="P:calcium-mediated signaling"/>
    <property type="evidence" value="ECO:0007669"/>
    <property type="project" value="TreeGrafter"/>
</dbReference>
<dbReference type="GO" id="GO:0060326">
    <property type="term" value="P:cell chemotaxis"/>
    <property type="evidence" value="ECO:0007669"/>
    <property type="project" value="TreeGrafter"/>
</dbReference>
<dbReference type="GO" id="GO:0006955">
    <property type="term" value="P:immune response"/>
    <property type="evidence" value="ECO:0007669"/>
    <property type="project" value="InterPro"/>
</dbReference>
<dbReference type="GO" id="GO:0006954">
    <property type="term" value="P:inflammatory response"/>
    <property type="evidence" value="ECO:0007669"/>
    <property type="project" value="InterPro"/>
</dbReference>
<dbReference type="GO" id="GO:0007204">
    <property type="term" value="P:positive regulation of cytosolic calcium ion concentration"/>
    <property type="evidence" value="ECO:0007669"/>
    <property type="project" value="TreeGrafter"/>
</dbReference>
<dbReference type="CDD" id="cd15184">
    <property type="entry name" value="7tmA_CCR5_CCR2"/>
    <property type="match status" value="1"/>
</dbReference>
<dbReference type="FunFam" id="1.20.1070.10:FF:000026">
    <property type="entry name" value="C-C chemokine receptor type 5"/>
    <property type="match status" value="1"/>
</dbReference>
<dbReference type="Gene3D" id="1.20.1070.10">
    <property type="entry name" value="Rhodopsin 7-helix transmembrane proteins"/>
    <property type="match status" value="1"/>
</dbReference>
<dbReference type="InterPro" id="IPR050119">
    <property type="entry name" value="CCR1-9-like"/>
</dbReference>
<dbReference type="InterPro" id="IPR002240">
    <property type="entry name" value="Chemokine_CCR5"/>
</dbReference>
<dbReference type="InterPro" id="IPR000355">
    <property type="entry name" value="Chemokine_rcpt"/>
</dbReference>
<dbReference type="InterPro" id="IPR000276">
    <property type="entry name" value="GPCR_Rhodpsn"/>
</dbReference>
<dbReference type="InterPro" id="IPR017452">
    <property type="entry name" value="GPCR_Rhodpsn_7TM"/>
</dbReference>
<dbReference type="PANTHER" id="PTHR10489:SF686">
    <property type="entry name" value="C-C CHEMOKINE RECEPTOR TYPE 5"/>
    <property type="match status" value="1"/>
</dbReference>
<dbReference type="PANTHER" id="PTHR10489">
    <property type="entry name" value="CELL ADHESION MOLECULE"/>
    <property type="match status" value="1"/>
</dbReference>
<dbReference type="Pfam" id="PF00001">
    <property type="entry name" value="7tm_1"/>
    <property type="match status" value="1"/>
</dbReference>
<dbReference type="PRINTS" id="PR00657">
    <property type="entry name" value="CCCHEMOKINER"/>
</dbReference>
<dbReference type="PRINTS" id="PR01110">
    <property type="entry name" value="CHEMOKINER5"/>
</dbReference>
<dbReference type="PRINTS" id="PR00237">
    <property type="entry name" value="GPCRRHODOPSN"/>
</dbReference>
<dbReference type="SUPFAM" id="SSF81321">
    <property type="entry name" value="Family A G protein-coupled receptor-like"/>
    <property type="match status" value="1"/>
</dbReference>
<dbReference type="PROSITE" id="PS00237">
    <property type="entry name" value="G_PROTEIN_RECEP_F1_1"/>
    <property type="match status" value="1"/>
</dbReference>
<dbReference type="PROSITE" id="PS50262">
    <property type="entry name" value="G_PROTEIN_RECEP_F1_2"/>
    <property type="match status" value="1"/>
</dbReference>
<proteinExistence type="inferred from homology"/>
<keyword id="KW-1003">Cell membrane</keyword>
<keyword id="KW-1015">Disulfide bond</keyword>
<keyword id="KW-0297">G-protein coupled receptor</keyword>
<keyword id="KW-0325">Glycoprotein</keyword>
<keyword id="KW-0449">Lipoprotein</keyword>
<keyword id="KW-0472">Membrane</keyword>
<keyword id="KW-0564">Palmitate</keyword>
<keyword id="KW-0597">Phosphoprotein</keyword>
<keyword id="KW-0675">Receptor</keyword>
<keyword id="KW-0765">Sulfation</keyword>
<keyword id="KW-0807">Transducer</keyword>
<keyword id="KW-0812">Transmembrane</keyword>
<keyword id="KW-1133">Transmembrane helix</keyword>